<evidence type="ECO:0000250" key="1">
    <source>
        <dbReference type="UniProtKB" id="P15468"/>
    </source>
</evidence>
<evidence type="ECO:0000255" key="2"/>
<evidence type="ECO:0000269" key="3">
    <source>
    </source>
</evidence>
<evidence type="ECO:0000269" key="4">
    <source>
    </source>
</evidence>
<evidence type="ECO:0000269" key="5">
    <source>
    </source>
</evidence>
<evidence type="ECO:0000269" key="6">
    <source>
    </source>
</evidence>
<evidence type="ECO:0000269" key="7">
    <source>
    </source>
</evidence>
<evidence type="ECO:0000269" key="8">
    <source>
    </source>
</evidence>
<evidence type="ECO:0000269" key="9">
    <source>
    </source>
</evidence>
<evidence type="ECO:0000305" key="10"/>
<evidence type="ECO:0000305" key="11">
    <source>
    </source>
</evidence>
<evidence type="ECO:0007744" key="12">
    <source>
        <dbReference type="PDB" id="2HKY"/>
    </source>
</evidence>
<evidence type="ECO:0007829" key="13">
    <source>
        <dbReference type="PDB" id="2HKY"/>
    </source>
</evidence>
<keyword id="KW-0002">3D-structure</keyword>
<keyword id="KW-0044">Antibiotic</keyword>
<keyword id="KW-0929">Antimicrobial</keyword>
<keyword id="KW-0903">Direct protein sequencing</keyword>
<keyword id="KW-1015">Disulfide bond</keyword>
<keyword id="KW-0255">Endonuclease</keyword>
<keyword id="KW-0325">Glycoprotein</keyword>
<keyword id="KW-0378">Hydrolase</keyword>
<keyword id="KW-0540">Nuclease</keyword>
<keyword id="KW-1267">Proteomics identification</keyword>
<keyword id="KW-1185">Reference proteome</keyword>
<keyword id="KW-0964">Secreted</keyword>
<keyword id="KW-0732">Signal</keyword>
<sequence>MAPARAGFCPLLLLLLLGLWVAEIPVSAKPKGMTSSQWFKIQHMQPSPQACNSAMKNINKHTKRCKDLNTFLHEPFSSVAATCQTPKIACKNGDKNCHQSHGAVSLTMCKLTSGKHPNCRYKEKRQNKSYVVACKPPQKKDSQQFHLVPVHLDRVL</sequence>
<name>RNAS7_HUMAN</name>
<proteinExistence type="evidence at protein level"/>
<reference key="1">
    <citation type="journal article" date="2002" name="J. Biol. Chem.">
        <title>RNase 7, a novel innate immune defense antimicrobial protein of healthy human skin.</title>
        <authorList>
            <person name="Harder J."/>
            <person name="Schroeder J.M."/>
        </authorList>
    </citation>
    <scope>NUCLEOTIDE SEQUENCE [MRNA]</scope>
    <scope>PROTEIN SEQUENCE OF 29-52</scope>
    <scope>FUNCTION</scope>
    <scope>CATALYTIC ACTIVITY</scope>
    <scope>BIOPHYSICOCHEMICAL PROPERTIES</scope>
    <scope>SUBCELLULAR LOCATION</scope>
    <scope>TISSUE SPECIFICITY</scope>
    <scope>INDUCTION</scope>
    <scope>VARIANTS PRO-103 AND TYR-116</scope>
    <scope>MASS SPECTROMETRY</scope>
</reference>
<reference key="2">
    <citation type="journal article" date="2003" name="Nucleic Acids Res.">
        <title>Human RNase 7: a new cationic ribonuclease of the RNase A superfamily.</title>
        <authorList>
            <person name="Zhang J."/>
            <person name="Dyer K.D."/>
            <person name="Rosenberg H.F."/>
        </authorList>
    </citation>
    <scope>NUCLEOTIDE SEQUENCE [MRNA]</scope>
    <scope>FUNCTION</scope>
    <scope>CATALYTIC ACTIVITY</scope>
    <scope>TISSUE SPECIFICITY</scope>
    <scope>VARIANTS PRO-103 AND TYR-116</scope>
    <source>
        <tissue>Kidney</tissue>
    </source>
</reference>
<reference key="3">
    <citation type="journal article" date="2003" name="Genome Res.">
        <title>The secreted protein discovery initiative (SPDI), a large-scale effort to identify novel human secreted and transmembrane proteins: a bioinformatics assessment.</title>
        <authorList>
            <person name="Clark H.F."/>
            <person name="Gurney A.L."/>
            <person name="Abaya E."/>
            <person name="Baker K."/>
            <person name="Baldwin D.T."/>
            <person name="Brush J."/>
            <person name="Chen J."/>
            <person name="Chow B."/>
            <person name="Chui C."/>
            <person name="Crowley C."/>
            <person name="Currell B."/>
            <person name="Deuel B."/>
            <person name="Dowd P."/>
            <person name="Eaton D."/>
            <person name="Foster J.S."/>
            <person name="Grimaldi C."/>
            <person name="Gu Q."/>
            <person name="Hass P.E."/>
            <person name="Heldens S."/>
            <person name="Huang A."/>
            <person name="Kim H.S."/>
            <person name="Klimowski L."/>
            <person name="Jin Y."/>
            <person name="Johnson S."/>
            <person name="Lee J."/>
            <person name="Lewis L."/>
            <person name="Liao D."/>
            <person name="Mark M.R."/>
            <person name="Robbie E."/>
            <person name="Sanchez C."/>
            <person name="Schoenfeld J."/>
            <person name="Seshagiri S."/>
            <person name="Simmons L."/>
            <person name="Singh J."/>
            <person name="Smith V."/>
            <person name="Stinson J."/>
            <person name="Vagts A."/>
            <person name="Vandlen R.L."/>
            <person name="Watanabe C."/>
            <person name="Wieand D."/>
            <person name="Woods K."/>
            <person name="Xie M.-H."/>
            <person name="Yansura D.G."/>
            <person name="Yi S."/>
            <person name="Yu G."/>
            <person name="Yuan J."/>
            <person name="Zhang M."/>
            <person name="Zhang Z."/>
            <person name="Goddard A.D."/>
            <person name="Wood W.I."/>
            <person name="Godowski P.J."/>
            <person name="Gray A.M."/>
        </authorList>
    </citation>
    <scope>NUCLEOTIDE SEQUENCE [LARGE SCALE MRNA]</scope>
    <scope>VARIANTS PRO-103 AND TYR-116</scope>
</reference>
<reference key="4">
    <citation type="journal article" date="2003" name="Nature">
        <title>The DNA sequence and analysis of human chromosome 14.</title>
        <authorList>
            <person name="Heilig R."/>
            <person name="Eckenberg R."/>
            <person name="Petit J.-L."/>
            <person name="Fonknechten N."/>
            <person name="Da Silva C."/>
            <person name="Cattolico L."/>
            <person name="Levy M."/>
            <person name="Barbe V."/>
            <person name="De Berardinis V."/>
            <person name="Ureta-Vidal A."/>
            <person name="Pelletier E."/>
            <person name="Vico V."/>
            <person name="Anthouard V."/>
            <person name="Rowen L."/>
            <person name="Madan A."/>
            <person name="Qin S."/>
            <person name="Sun H."/>
            <person name="Du H."/>
            <person name="Pepin K."/>
            <person name="Artiguenave F."/>
            <person name="Robert C."/>
            <person name="Cruaud C."/>
            <person name="Bruels T."/>
            <person name="Jaillon O."/>
            <person name="Friedlander L."/>
            <person name="Samson G."/>
            <person name="Brottier P."/>
            <person name="Cure S."/>
            <person name="Segurens B."/>
            <person name="Aniere F."/>
            <person name="Samain S."/>
            <person name="Crespeau H."/>
            <person name="Abbasi N."/>
            <person name="Aiach N."/>
            <person name="Boscus D."/>
            <person name="Dickhoff R."/>
            <person name="Dors M."/>
            <person name="Dubois I."/>
            <person name="Friedman C."/>
            <person name="Gouyvenoux M."/>
            <person name="James R."/>
            <person name="Madan A."/>
            <person name="Mairey-Estrada B."/>
            <person name="Mangenot S."/>
            <person name="Martins N."/>
            <person name="Menard M."/>
            <person name="Oztas S."/>
            <person name="Ratcliffe A."/>
            <person name="Shaffer T."/>
            <person name="Trask B."/>
            <person name="Vacherie B."/>
            <person name="Bellemere C."/>
            <person name="Belser C."/>
            <person name="Besnard-Gonnet M."/>
            <person name="Bartol-Mavel D."/>
            <person name="Boutard M."/>
            <person name="Briez-Silla S."/>
            <person name="Combette S."/>
            <person name="Dufosse-Laurent V."/>
            <person name="Ferron C."/>
            <person name="Lechaplais C."/>
            <person name="Louesse C."/>
            <person name="Muselet D."/>
            <person name="Magdelenat G."/>
            <person name="Pateau E."/>
            <person name="Petit E."/>
            <person name="Sirvain-Trukniewicz P."/>
            <person name="Trybou A."/>
            <person name="Vega-Czarny N."/>
            <person name="Bataille E."/>
            <person name="Bluet E."/>
            <person name="Bordelais I."/>
            <person name="Dubois M."/>
            <person name="Dumont C."/>
            <person name="Guerin T."/>
            <person name="Haffray S."/>
            <person name="Hammadi R."/>
            <person name="Muanga J."/>
            <person name="Pellouin V."/>
            <person name="Robert D."/>
            <person name="Wunderle E."/>
            <person name="Gauguet G."/>
            <person name="Roy A."/>
            <person name="Sainte-Marthe L."/>
            <person name="Verdier J."/>
            <person name="Verdier-Discala C."/>
            <person name="Hillier L.W."/>
            <person name="Fulton L."/>
            <person name="McPherson J."/>
            <person name="Matsuda F."/>
            <person name="Wilson R."/>
            <person name="Scarpelli C."/>
            <person name="Gyapay G."/>
            <person name="Wincker P."/>
            <person name="Saurin W."/>
            <person name="Quetier F."/>
            <person name="Waterston R."/>
            <person name="Hood L."/>
            <person name="Weissenbach J."/>
        </authorList>
    </citation>
    <scope>NUCLEOTIDE SEQUENCE [LARGE SCALE GENOMIC DNA]</scope>
</reference>
<reference key="5">
    <citation type="journal article" date="2004" name="Genome Res.">
        <title>The status, quality, and expansion of the NIH full-length cDNA project: the Mammalian Gene Collection (MGC).</title>
        <authorList>
            <consortium name="The MGC Project Team"/>
        </authorList>
    </citation>
    <scope>NUCLEOTIDE SEQUENCE [LARGE SCALE MRNA]</scope>
    <scope>VARIANTS PRO-103 AND TYR-116</scope>
</reference>
<reference key="6">
    <citation type="submission" date="1997-03" db="UniProtKB">
        <authorList>
            <person name="Harder J."/>
            <person name="Bartels J."/>
            <person name="Christophers E."/>
            <person name="Schroeder J.M."/>
        </authorList>
    </citation>
    <scope>PRELIMINARY PROTEIN SEQUENCE OF 30-70</scope>
    <source>
        <tissue>Keratinocyte</tissue>
    </source>
</reference>
<reference key="7">
    <citation type="journal article" date="2015" name="Kidney Int.">
        <title>Ribonucleases 6 and 7 have antimicrobial function in the human and murine urinary tract.</title>
        <authorList>
            <person name="Becknell B."/>
            <person name="Eichler T.E."/>
            <person name="Beceiro S."/>
            <person name="Li B."/>
            <person name="Easterling R.S."/>
            <person name="Carpenter A.R."/>
            <person name="James C.L."/>
            <person name="McHugh K.M."/>
            <person name="Hains D.S."/>
            <person name="Partida-Sanchez S."/>
            <person name="Spencer J.D."/>
        </authorList>
    </citation>
    <scope>FUNCTION</scope>
    <scope>SUBCELLULAR LOCATION</scope>
    <scope>TISSUE SPECIFICITY</scope>
    <scope>INDUCTION</scope>
</reference>
<reference key="8">
    <citation type="journal article" date="2021" name="Am. J. Physiol.">
        <title>Expression and function of human ribonuclease 4 in the kidney and urinary tract.</title>
        <authorList>
            <person name="Bender K."/>
            <person name="Schwartz L.L."/>
            <person name="Cohen A."/>
            <person name="Vasquez C.M."/>
            <person name="Murtha M.J."/>
            <person name="Eichler T."/>
            <person name="Thomas J.P."/>
            <person name="Jackson A."/>
            <person name="Spencer J.D."/>
        </authorList>
    </citation>
    <scope>FUNCTION</scope>
</reference>
<reference key="9">
    <citation type="journal article" date="2007" name="J. Biol. Chem.">
        <title>The flexible and clustered lysine residues of human ribonuclease 7 are critical for membrane permeability and antimicrobial activity.</title>
        <authorList>
            <person name="Huang Y.-C."/>
            <person name="Lin Y.-M."/>
            <person name="Chang T.-W."/>
            <person name="Wu S.-J."/>
            <person name="Lee Y.-S."/>
            <person name="Chang M.D.-S."/>
            <person name="Chen C."/>
            <person name="Wu S.-H."/>
            <person name="Liao Y.-D."/>
        </authorList>
    </citation>
    <scope>STRUCTURE BY NMR OF 29-156</scope>
    <scope>FUNCTION</scope>
    <scope>CATALYTIC ACTIVITY</scope>
    <scope>DISULFIDE BONDS</scope>
    <scope>MUTAGENESIS OF 29-LYS--GLY-32; LYS-29; LYS-31; HIS-43; 60-LYS--LYS-63; LYS-66; 124-LYS--LYS-128; 139-LYS-LYS-140 AND HIS-151</scope>
</reference>
<dbReference type="EC" id="3.1.27.-" evidence="3 4 7"/>
<dbReference type="EMBL" id="AJ131212">
    <property type="protein sequence ID" value="CAC20410.1"/>
    <property type="molecule type" value="mRNA"/>
</dbReference>
<dbReference type="EMBL" id="AJ306608">
    <property type="protein sequence ID" value="CAC84462.1"/>
    <property type="molecule type" value="mRNA"/>
</dbReference>
<dbReference type="EMBL" id="AJ306609">
    <property type="protein sequence ID" value="CAC84457.1"/>
    <property type="molecule type" value="mRNA"/>
</dbReference>
<dbReference type="EMBL" id="AJ306610">
    <property type="protein sequence ID" value="CAC84458.1"/>
    <property type="molecule type" value="mRNA"/>
</dbReference>
<dbReference type="EMBL" id="AY170392">
    <property type="protein sequence ID" value="AAO12510.1"/>
    <property type="molecule type" value="mRNA"/>
</dbReference>
<dbReference type="EMBL" id="AY359097">
    <property type="protein sequence ID" value="AAQ89455.1"/>
    <property type="molecule type" value="mRNA"/>
</dbReference>
<dbReference type="EMBL" id="AL161668">
    <property type="status" value="NOT_ANNOTATED_CDS"/>
    <property type="molecule type" value="Genomic_DNA"/>
</dbReference>
<dbReference type="EMBL" id="BC074960">
    <property type="protein sequence ID" value="AAH74960.1"/>
    <property type="molecule type" value="mRNA"/>
</dbReference>
<dbReference type="EMBL" id="BC112334">
    <property type="protein sequence ID" value="AAI12335.1"/>
    <property type="molecule type" value="mRNA"/>
</dbReference>
<dbReference type="CCDS" id="CCDS41914.1"/>
<dbReference type="RefSeq" id="NP_115961.3">
    <property type="nucleotide sequence ID" value="NM_032572.4"/>
</dbReference>
<dbReference type="PDB" id="2HKY">
    <property type="method" value="NMR"/>
    <property type="chains" value="A=29-156"/>
</dbReference>
<dbReference type="PDBsum" id="2HKY"/>
<dbReference type="BMRB" id="Q9H1E1"/>
<dbReference type="SMR" id="Q9H1E1"/>
<dbReference type="BioGRID" id="124179">
    <property type="interactions" value="103"/>
</dbReference>
<dbReference type="FunCoup" id="Q9H1E1">
    <property type="interactions" value="349"/>
</dbReference>
<dbReference type="IntAct" id="Q9H1E1">
    <property type="interactions" value="62"/>
</dbReference>
<dbReference type="STRING" id="9606.ENSP00000298690"/>
<dbReference type="GlyCosmos" id="Q9H1E1">
    <property type="glycosylation" value="1 site, No reported glycans"/>
</dbReference>
<dbReference type="GlyGen" id="Q9H1E1">
    <property type="glycosylation" value="1 site"/>
</dbReference>
<dbReference type="iPTMnet" id="Q9H1E1"/>
<dbReference type="PhosphoSitePlus" id="Q9H1E1"/>
<dbReference type="BioMuta" id="RNASE7"/>
<dbReference type="DMDM" id="296452879"/>
<dbReference type="MassIVE" id="Q9H1E1"/>
<dbReference type="PaxDb" id="9606-ENSP00000298690"/>
<dbReference type="PeptideAtlas" id="Q9H1E1"/>
<dbReference type="ProteomicsDB" id="80403"/>
<dbReference type="Pumba" id="Q9H1E1"/>
<dbReference type="Antibodypedia" id="69">
    <property type="antibodies" value="76 antibodies from 14 providers"/>
</dbReference>
<dbReference type="DNASU" id="84659"/>
<dbReference type="Ensembl" id="ENST00000298690.5">
    <property type="protein sequence ID" value="ENSP00000298690.3"/>
    <property type="gene ID" value="ENSG00000165799.5"/>
</dbReference>
<dbReference type="Ensembl" id="ENST00000481538.1">
    <property type="protein sequence ID" value="ENSP00000431382.1"/>
    <property type="gene ID" value="ENSG00000165799.5"/>
</dbReference>
<dbReference type="GeneID" id="84659"/>
<dbReference type="KEGG" id="hsa:84659"/>
<dbReference type="MANE-Select" id="ENST00000298690.5">
    <property type="protein sequence ID" value="ENSP00000298690.3"/>
    <property type="RefSeq nucleotide sequence ID" value="NM_032572.4"/>
    <property type="RefSeq protein sequence ID" value="NP_115961.3"/>
</dbReference>
<dbReference type="UCSC" id="uc001vzk.4">
    <property type="organism name" value="human"/>
</dbReference>
<dbReference type="AGR" id="HGNC:19278"/>
<dbReference type="CTD" id="84659"/>
<dbReference type="DisGeNET" id="84659"/>
<dbReference type="GeneCards" id="RNASE7"/>
<dbReference type="HGNC" id="HGNC:19278">
    <property type="gene designation" value="RNASE7"/>
</dbReference>
<dbReference type="HPA" id="ENSG00000165799">
    <property type="expression patterns" value="Group enriched (esophagus, lymphoid tissue, skin)"/>
</dbReference>
<dbReference type="MIM" id="612484">
    <property type="type" value="gene"/>
</dbReference>
<dbReference type="neXtProt" id="NX_Q9H1E1"/>
<dbReference type="OpenTargets" id="ENSG00000165799"/>
<dbReference type="PharmGKB" id="PA134939592"/>
<dbReference type="VEuPathDB" id="HostDB:ENSG00000165799"/>
<dbReference type="eggNOG" id="ENOG502TDZ3">
    <property type="taxonomic scope" value="Eukaryota"/>
</dbReference>
<dbReference type="GeneTree" id="ENSGT00940000164606"/>
<dbReference type="HOGENOM" id="CLU_117006_0_1_1"/>
<dbReference type="InParanoid" id="Q9H1E1"/>
<dbReference type="OMA" id="MTPSQWF"/>
<dbReference type="OrthoDB" id="9450033at2759"/>
<dbReference type="PAN-GO" id="Q9H1E1">
    <property type="GO annotations" value="6 GO annotations based on evolutionary models"/>
</dbReference>
<dbReference type="PhylomeDB" id="Q9H1E1"/>
<dbReference type="TreeFam" id="TF333393"/>
<dbReference type="PathwayCommons" id="Q9H1E1"/>
<dbReference type="Reactome" id="R-HSA-6803157">
    <property type="pathway name" value="Antimicrobial peptides"/>
</dbReference>
<dbReference type="SignaLink" id="Q9H1E1"/>
<dbReference type="BioGRID-ORCS" id="84659">
    <property type="hits" value="11 hits in 1135 CRISPR screens"/>
</dbReference>
<dbReference type="EvolutionaryTrace" id="Q9H1E1"/>
<dbReference type="GenomeRNAi" id="84659"/>
<dbReference type="Pharos" id="Q9H1E1">
    <property type="development level" value="Tbio"/>
</dbReference>
<dbReference type="PRO" id="PR:Q9H1E1"/>
<dbReference type="Proteomes" id="UP000005640">
    <property type="component" value="Chromosome 14"/>
</dbReference>
<dbReference type="RNAct" id="Q9H1E1">
    <property type="molecule type" value="protein"/>
</dbReference>
<dbReference type="Bgee" id="ENSG00000165799">
    <property type="expression patterns" value="Expressed in upper arm skin and 75 other cell types or tissues"/>
</dbReference>
<dbReference type="GO" id="GO:0005737">
    <property type="term" value="C:cytoplasm"/>
    <property type="evidence" value="ECO:0000314"/>
    <property type="project" value="UniProtKB"/>
</dbReference>
<dbReference type="GO" id="GO:0005576">
    <property type="term" value="C:extracellular region"/>
    <property type="evidence" value="ECO:0000314"/>
    <property type="project" value="UniProtKB"/>
</dbReference>
<dbReference type="GO" id="GO:0005615">
    <property type="term" value="C:extracellular space"/>
    <property type="evidence" value="ECO:0000314"/>
    <property type="project" value="UniProtKB"/>
</dbReference>
<dbReference type="GO" id="GO:0004519">
    <property type="term" value="F:endonuclease activity"/>
    <property type="evidence" value="ECO:0007669"/>
    <property type="project" value="UniProtKB-KW"/>
</dbReference>
<dbReference type="GO" id="GO:0001530">
    <property type="term" value="F:lipopolysaccharide binding"/>
    <property type="evidence" value="ECO:0000314"/>
    <property type="project" value="UniProtKB"/>
</dbReference>
<dbReference type="GO" id="GO:0003676">
    <property type="term" value="F:nucleic acid binding"/>
    <property type="evidence" value="ECO:0007669"/>
    <property type="project" value="InterPro"/>
</dbReference>
<dbReference type="GO" id="GO:0042834">
    <property type="term" value="F:peptidoglycan binding"/>
    <property type="evidence" value="ECO:0000314"/>
    <property type="project" value="UniProtKB"/>
</dbReference>
<dbReference type="GO" id="GO:0004540">
    <property type="term" value="F:RNA nuclease activity"/>
    <property type="evidence" value="ECO:0000314"/>
    <property type="project" value="UniProtKB"/>
</dbReference>
<dbReference type="GO" id="GO:0019731">
    <property type="term" value="P:antibacterial humoral response"/>
    <property type="evidence" value="ECO:0000314"/>
    <property type="project" value="UniProtKB"/>
</dbReference>
<dbReference type="GO" id="GO:0061844">
    <property type="term" value="P:antimicrobial humoral immune response mediated by antimicrobial peptide"/>
    <property type="evidence" value="ECO:0000314"/>
    <property type="project" value="UniProtKB"/>
</dbReference>
<dbReference type="GO" id="GO:0051715">
    <property type="term" value="P:cytolysis in another organism"/>
    <property type="evidence" value="ECO:0000314"/>
    <property type="project" value="UniProtKB"/>
</dbReference>
<dbReference type="GO" id="GO:0050832">
    <property type="term" value="P:defense response to fungus"/>
    <property type="evidence" value="ECO:0000314"/>
    <property type="project" value="UniProtKB"/>
</dbReference>
<dbReference type="GO" id="GO:0050829">
    <property type="term" value="P:defense response to Gram-negative bacterium"/>
    <property type="evidence" value="ECO:0000314"/>
    <property type="project" value="UniProtKB"/>
</dbReference>
<dbReference type="GO" id="GO:0050830">
    <property type="term" value="P:defense response to Gram-positive bacterium"/>
    <property type="evidence" value="ECO:0000314"/>
    <property type="project" value="UniProtKB"/>
</dbReference>
<dbReference type="GO" id="GO:0045087">
    <property type="term" value="P:innate immune response"/>
    <property type="evidence" value="ECO:0000314"/>
    <property type="project" value="UniProtKB"/>
</dbReference>
<dbReference type="CDD" id="cd06265">
    <property type="entry name" value="RNase_A_canonical"/>
    <property type="match status" value="1"/>
</dbReference>
<dbReference type="FunFam" id="3.10.130.10:FF:000001">
    <property type="entry name" value="Ribonuclease pancreatic"/>
    <property type="match status" value="1"/>
</dbReference>
<dbReference type="Gene3D" id="3.10.130.10">
    <property type="entry name" value="Ribonuclease A-like domain"/>
    <property type="match status" value="1"/>
</dbReference>
<dbReference type="InterPro" id="IPR001427">
    <property type="entry name" value="RNaseA"/>
</dbReference>
<dbReference type="InterPro" id="IPR036816">
    <property type="entry name" value="RNaseA-like_dom_sf"/>
</dbReference>
<dbReference type="InterPro" id="IPR023411">
    <property type="entry name" value="RNaseA_AS"/>
</dbReference>
<dbReference type="InterPro" id="IPR023412">
    <property type="entry name" value="RNaseA_domain"/>
</dbReference>
<dbReference type="PANTHER" id="PTHR11437">
    <property type="entry name" value="RIBONUCLEASE"/>
    <property type="match status" value="1"/>
</dbReference>
<dbReference type="PANTHER" id="PTHR11437:SF31">
    <property type="entry name" value="RIBONUCLEASE 7"/>
    <property type="match status" value="1"/>
</dbReference>
<dbReference type="Pfam" id="PF00074">
    <property type="entry name" value="RnaseA"/>
    <property type="match status" value="1"/>
</dbReference>
<dbReference type="PRINTS" id="PR00794">
    <property type="entry name" value="RIBONUCLEASE"/>
</dbReference>
<dbReference type="SMART" id="SM00092">
    <property type="entry name" value="RNAse_Pc"/>
    <property type="match status" value="1"/>
</dbReference>
<dbReference type="SUPFAM" id="SSF54076">
    <property type="entry name" value="RNase A-like"/>
    <property type="match status" value="1"/>
</dbReference>
<dbReference type="PROSITE" id="PS00127">
    <property type="entry name" value="RNASE_PANCREATIC"/>
    <property type="match status" value="1"/>
</dbReference>
<comment type="function">
    <text evidence="3 4 7 8 9">Exhibits a potent RNase activity (PubMed:12244054, PubMed:12527768, PubMed:17150966). Has broad-spectrum antimicrobial activity against many pathogenic microorganisms including uropathogenic E.coli (UPEC), and remarkably potent activity (lethal dose of 90% &lt; 30 nM) against a vancomycin resistant Enterococcus faecium (PubMed:12244054, PubMed:12527768, PubMed:17150966, PubMed:25075772, PubMed:33818125). Causes loss of bacterial membrane integrity (PubMed:17150966). Probably contributes to urinary tract sterility (PubMed:25075772). Bactericidal activity is independent of RNase activity (PubMed:17150966).</text>
</comment>
<comment type="biophysicochemical properties">
    <kinetics>
        <KM evidence="3">2.2 uM for tRNA</KM>
    </kinetics>
</comment>
<comment type="interaction">
    <interactant intactId="EBI-21572634">
        <id>Q9H1E1</id>
    </interactant>
    <interactant intactId="EBI-1237106">
        <id>P13489</id>
        <label>RNH1</label>
    </interactant>
    <organismsDiffer>false</organismsDiffer>
    <experiments>2</experiments>
</comment>
<comment type="subcellular location">
    <subcellularLocation>
        <location evidence="3 8">Secreted</location>
    </subcellularLocation>
    <text evidence="8">Detected in urine.</text>
</comment>
<comment type="tissue specificity">
    <text evidence="3 4 8">Expressed in collecting ducts in kidney, and in apical uroepithelium in bladder (at protein level) (PubMed:25075772). Expressed in various epithelial tissues including skin, respiratory tract, genito-urinary tract and, at a low level, in the gut (PubMed:12244054). Expressed in liver, kidney, skeletal muscle and heart (PubMed:12527768).</text>
</comment>
<comment type="induction">
    <text evidence="3 8">Up-regulated in response to the cytokines IL1B, IFNG and TNF (PubMed:12244054). Strongly up-regulated in response to the bacterium P.aeruginosa (PubMed:12244054). Moderately up-regulated in response to S.aureus, E.coli and S.pyogenes (PubMed:12244054). Up-regulated in kidney in response to infection (PubMed:25075772).</text>
</comment>
<comment type="mass spectrometry"/>
<comment type="similarity">
    <text evidence="10">Belongs to the pancreatic ribonuclease family.</text>
</comment>
<gene>
    <name type="primary">RNASE7</name>
    <name type="ORF">UNQ2516/PRO6006</name>
</gene>
<accession>Q9H1E1</accession>
<accession>P80927</accession>
<accession>P83685</accession>
<accession>Q546N3</accession>
<organism>
    <name type="scientific">Homo sapiens</name>
    <name type="common">Human</name>
    <dbReference type="NCBI Taxonomy" id="9606"/>
    <lineage>
        <taxon>Eukaryota</taxon>
        <taxon>Metazoa</taxon>
        <taxon>Chordata</taxon>
        <taxon>Craniata</taxon>
        <taxon>Vertebrata</taxon>
        <taxon>Euteleostomi</taxon>
        <taxon>Mammalia</taxon>
        <taxon>Eutheria</taxon>
        <taxon>Euarchontoglires</taxon>
        <taxon>Primates</taxon>
        <taxon>Haplorrhini</taxon>
        <taxon>Catarrhini</taxon>
        <taxon>Hominidae</taxon>
        <taxon>Homo</taxon>
    </lineage>
</organism>
<feature type="signal peptide" evidence="3">
    <location>
        <begin position="1"/>
        <end position="28"/>
    </location>
</feature>
<feature type="chain" id="PRO_0000030901" description="Ribonuclease 7">
    <location>
        <begin position="29"/>
        <end position="156"/>
    </location>
</feature>
<feature type="region of interest" description="Important for antibacterial activity" evidence="7">
    <location>
        <begin position="29"/>
        <end position="32"/>
    </location>
</feature>
<feature type="region of interest" description="Important for antibacterial activity" evidence="7">
    <location>
        <begin position="139"/>
        <end position="140"/>
    </location>
</feature>
<feature type="active site" description="Proton acceptor" evidence="11">
    <location>
        <position position="43"/>
    </location>
</feature>
<feature type="active site" description="Proton donor" evidence="11">
    <location>
        <position position="151"/>
    </location>
</feature>
<feature type="binding site" evidence="1">
    <location>
        <position position="43"/>
    </location>
    <ligand>
        <name>dUMP</name>
        <dbReference type="ChEBI" id="CHEBI:246422"/>
    </ligand>
</feature>
<feature type="binding site" evidence="1">
    <location>
        <position position="66"/>
    </location>
    <ligand>
        <name>dUMP</name>
        <dbReference type="ChEBI" id="CHEBI:246422"/>
    </ligand>
</feature>
<feature type="binding site" evidence="1">
    <location>
        <position position="69"/>
    </location>
    <ligand>
        <name>dUMP</name>
        <dbReference type="ChEBI" id="CHEBI:246422"/>
    </ligand>
</feature>
<feature type="binding site" evidence="1">
    <location>
        <position position="70"/>
    </location>
    <ligand>
        <name>dUMP</name>
        <dbReference type="ChEBI" id="CHEBI:246422"/>
    </ligand>
</feature>
<feature type="binding site" evidence="1">
    <location>
        <position position="151"/>
    </location>
    <ligand>
        <name>dUMP</name>
        <dbReference type="ChEBI" id="CHEBI:246422"/>
    </ligand>
</feature>
<feature type="binding site" evidence="1">
    <location>
        <position position="154"/>
    </location>
    <ligand>
        <name>dUMP</name>
        <dbReference type="ChEBI" id="CHEBI:246422"/>
    </ligand>
</feature>
<feature type="site" description="Critical for catalytic activity" evidence="7">
    <location>
        <position position="66"/>
    </location>
</feature>
<feature type="glycosylation site" description="N-linked (GlcNAc...) asparagine" evidence="2">
    <location>
        <position position="127"/>
    </location>
</feature>
<feature type="disulfide bond" evidence="7 12">
    <location>
        <begin position="51"/>
        <end position="109"/>
    </location>
</feature>
<feature type="disulfide bond" evidence="7 12">
    <location>
        <begin position="65"/>
        <end position="119"/>
    </location>
</feature>
<feature type="disulfide bond" evidence="7 12">
    <location>
        <begin position="83"/>
        <end position="134"/>
    </location>
</feature>
<feature type="disulfide bond" evidence="7 12">
    <location>
        <begin position="90"/>
        <end position="97"/>
    </location>
</feature>
<feature type="sequence variant" id="VAR_024619" description="In dbSNP:rs1263872." evidence="3 4 5 6">
    <original>A</original>
    <variation>P</variation>
    <location>
        <position position="103"/>
    </location>
</feature>
<feature type="sequence variant" id="VAR_024620" description="In dbSNP:rs1243469." evidence="3 4 5 6">
    <original>H</original>
    <variation>Y</variation>
    <location>
        <position position="116"/>
    </location>
</feature>
<feature type="mutagenesis site" description="Significant loss of bactericidal activity. No effect on catalytic activity." evidence="7">
    <location>
        <begin position="29"/>
        <end position="32"/>
    </location>
</feature>
<feature type="mutagenesis site" description="Slight loss of bactericidal activity. No effect on catalytic activity." evidence="7">
    <original>K</original>
    <variation>A</variation>
    <location>
        <position position="29"/>
    </location>
</feature>
<feature type="mutagenesis site" description="Significant loss of bactericidal activity. No effect on catalytic activity." evidence="7">
    <original>K</original>
    <variation>A</variation>
    <location>
        <position position="31"/>
    </location>
</feature>
<feature type="mutagenesis site" description="Loss of catalytic activity. No effect on bactericidal activity." evidence="7">
    <original>H</original>
    <variation>A</variation>
    <location>
        <position position="43"/>
    </location>
</feature>
<feature type="mutagenesis site" description="No significant effect on bactericidal activity or catalytic activity." evidence="7">
    <original>KHTK</original>
    <variation>NHTQ</variation>
    <location>
        <begin position="60"/>
        <end position="63"/>
    </location>
</feature>
<feature type="mutagenesis site" description="Loss of catalytic activity. No effect on bactericidal activity." evidence="7">
    <original>K</original>
    <variation>A</variation>
    <location>
        <position position="66"/>
    </location>
</feature>
<feature type="mutagenesis site" description="No significant effect on bactericidal activity or catalytic activity." evidence="7">
    <original>KRQNK</original>
    <variation>AAQNT</variation>
    <location>
        <begin position="124"/>
        <end position="128"/>
    </location>
</feature>
<feature type="mutagenesis site" description="Moderate loss of bactericidal activity. No effect on catalytic activity." evidence="7">
    <original>KK</original>
    <variation>QQ</variation>
    <location>
        <begin position="139"/>
        <end position="140"/>
    </location>
</feature>
<feature type="mutagenesis site" description="Loss of catalytic activity. No effect on bactericidal activity." evidence="7">
    <original>H</original>
    <variation>A</variation>
    <location>
        <position position="151"/>
    </location>
</feature>
<feature type="helix" evidence="13">
    <location>
        <begin position="35"/>
        <end position="43"/>
    </location>
</feature>
<feature type="helix" evidence="13">
    <location>
        <begin position="50"/>
        <end position="62"/>
    </location>
</feature>
<feature type="strand" evidence="13">
    <location>
        <begin position="67"/>
        <end position="72"/>
    </location>
</feature>
<feature type="helix" evidence="13">
    <location>
        <begin position="76"/>
        <end position="82"/>
    </location>
</feature>
<feature type="strand" evidence="13">
    <location>
        <begin position="90"/>
        <end position="93"/>
    </location>
</feature>
<feature type="strand" evidence="13">
    <location>
        <begin position="97"/>
        <end position="99"/>
    </location>
</feature>
<feature type="strand" evidence="13">
    <location>
        <begin position="104"/>
        <end position="114"/>
    </location>
</feature>
<feature type="strand" evidence="13">
    <location>
        <begin position="120"/>
        <end position="128"/>
    </location>
</feature>
<feature type="strand" evidence="13">
    <location>
        <begin position="130"/>
        <end position="135"/>
    </location>
</feature>
<feature type="strand" evidence="13">
    <location>
        <begin position="146"/>
        <end position="155"/>
    </location>
</feature>
<protein>
    <recommendedName>
        <fullName>Ribonuclease 7</fullName>
        <shortName>RNase 7</shortName>
        <ecNumber evidence="3 4 7">3.1.27.-</ecNumber>
    </recommendedName>
    <alternativeName>
        <fullName>Skin-derived antimicrobial protein 2</fullName>
        <shortName>SAP-2</shortName>
    </alternativeName>
</protein>